<proteinExistence type="inferred from homology"/>
<keyword id="KW-0963">Cytoplasm</keyword>
<keyword id="KW-0312">Gluconeogenesis</keyword>
<keyword id="KW-0324">Glycolysis</keyword>
<keyword id="KW-0413">Isomerase</keyword>
<gene>
    <name evidence="1" type="primary">pgi</name>
    <name type="ordered locus">RSKD131_1059</name>
</gene>
<organism>
    <name type="scientific">Cereibacter sphaeroides (strain KD131 / KCTC 12085)</name>
    <name type="common">Rhodobacter sphaeroides</name>
    <dbReference type="NCBI Taxonomy" id="557760"/>
    <lineage>
        <taxon>Bacteria</taxon>
        <taxon>Pseudomonadati</taxon>
        <taxon>Pseudomonadota</taxon>
        <taxon>Alphaproteobacteria</taxon>
        <taxon>Rhodobacterales</taxon>
        <taxon>Paracoccaceae</taxon>
        <taxon>Cereibacter</taxon>
    </lineage>
</organism>
<name>G6PI_CERSK</name>
<accession>B9KRX7</accession>
<dbReference type="EC" id="5.3.1.9" evidence="1"/>
<dbReference type="EMBL" id="CP001150">
    <property type="protein sequence ID" value="ACM00919.1"/>
    <property type="molecule type" value="Genomic_DNA"/>
</dbReference>
<dbReference type="RefSeq" id="WP_015920489.1">
    <property type="nucleotide sequence ID" value="NC_011963.1"/>
</dbReference>
<dbReference type="SMR" id="B9KRX7"/>
<dbReference type="GeneID" id="67446489"/>
<dbReference type="KEGG" id="rsk:RSKD131_1059"/>
<dbReference type="HOGENOM" id="CLU_017947_3_1_5"/>
<dbReference type="UniPathway" id="UPA00109">
    <property type="reaction ID" value="UER00181"/>
</dbReference>
<dbReference type="UniPathway" id="UPA00138"/>
<dbReference type="GO" id="GO:0005829">
    <property type="term" value="C:cytosol"/>
    <property type="evidence" value="ECO:0007669"/>
    <property type="project" value="TreeGrafter"/>
</dbReference>
<dbReference type="GO" id="GO:0097367">
    <property type="term" value="F:carbohydrate derivative binding"/>
    <property type="evidence" value="ECO:0007669"/>
    <property type="project" value="InterPro"/>
</dbReference>
<dbReference type="GO" id="GO:0004347">
    <property type="term" value="F:glucose-6-phosphate isomerase activity"/>
    <property type="evidence" value="ECO:0007669"/>
    <property type="project" value="UniProtKB-UniRule"/>
</dbReference>
<dbReference type="GO" id="GO:0048029">
    <property type="term" value="F:monosaccharide binding"/>
    <property type="evidence" value="ECO:0007669"/>
    <property type="project" value="TreeGrafter"/>
</dbReference>
<dbReference type="GO" id="GO:0006094">
    <property type="term" value="P:gluconeogenesis"/>
    <property type="evidence" value="ECO:0007669"/>
    <property type="project" value="UniProtKB-UniRule"/>
</dbReference>
<dbReference type="GO" id="GO:0051156">
    <property type="term" value="P:glucose 6-phosphate metabolic process"/>
    <property type="evidence" value="ECO:0007669"/>
    <property type="project" value="TreeGrafter"/>
</dbReference>
<dbReference type="GO" id="GO:0006096">
    <property type="term" value="P:glycolytic process"/>
    <property type="evidence" value="ECO:0007669"/>
    <property type="project" value="UniProtKB-UniRule"/>
</dbReference>
<dbReference type="CDD" id="cd05015">
    <property type="entry name" value="SIS_PGI_1"/>
    <property type="match status" value="1"/>
</dbReference>
<dbReference type="CDD" id="cd05016">
    <property type="entry name" value="SIS_PGI_2"/>
    <property type="match status" value="1"/>
</dbReference>
<dbReference type="Gene3D" id="1.10.1390.10">
    <property type="match status" value="1"/>
</dbReference>
<dbReference type="Gene3D" id="3.40.50.10490">
    <property type="entry name" value="Glucose-6-phosphate isomerase like protein, domain 1"/>
    <property type="match status" value="2"/>
</dbReference>
<dbReference type="HAMAP" id="MF_00473">
    <property type="entry name" value="G6P_isomerase"/>
    <property type="match status" value="1"/>
</dbReference>
<dbReference type="InterPro" id="IPR001672">
    <property type="entry name" value="G6P_Isomerase"/>
</dbReference>
<dbReference type="InterPro" id="IPR023096">
    <property type="entry name" value="G6P_Isomerase_C"/>
</dbReference>
<dbReference type="InterPro" id="IPR018189">
    <property type="entry name" value="Phosphoglucose_isomerase_CS"/>
</dbReference>
<dbReference type="InterPro" id="IPR046348">
    <property type="entry name" value="SIS_dom_sf"/>
</dbReference>
<dbReference type="InterPro" id="IPR035476">
    <property type="entry name" value="SIS_PGI_1"/>
</dbReference>
<dbReference type="InterPro" id="IPR035482">
    <property type="entry name" value="SIS_PGI_2"/>
</dbReference>
<dbReference type="NCBIfam" id="NF001211">
    <property type="entry name" value="PRK00179.1"/>
    <property type="match status" value="1"/>
</dbReference>
<dbReference type="PANTHER" id="PTHR11469">
    <property type="entry name" value="GLUCOSE-6-PHOSPHATE ISOMERASE"/>
    <property type="match status" value="1"/>
</dbReference>
<dbReference type="PANTHER" id="PTHR11469:SF1">
    <property type="entry name" value="GLUCOSE-6-PHOSPHATE ISOMERASE"/>
    <property type="match status" value="1"/>
</dbReference>
<dbReference type="Pfam" id="PF00342">
    <property type="entry name" value="PGI"/>
    <property type="match status" value="1"/>
</dbReference>
<dbReference type="PRINTS" id="PR00662">
    <property type="entry name" value="G6PISOMERASE"/>
</dbReference>
<dbReference type="SUPFAM" id="SSF53697">
    <property type="entry name" value="SIS domain"/>
    <property type="match status" value="1"/>
</dbReference>
<dbReference type="PROSITE" id="PS00765">
    <property type="entry name" value="P_GLUCOSE_ISOMERASE_1"/>
    <property type="match status" value="1"/>
</dbReference>
<dbReference type="PROSITE" id="PS00174">
    <property type="entry name" value="P_GLUCOSE_ISOMERASE_2"/>
    <property type="match status" value="1"/>
</dbReference>
<dbReference type="PROSITE" id="PS51463">
    <property type="entry name" value="P_GLUCOSE_ISOMERASE_3"/>
    <property type="match status" value="1"/>
</dbReference>
<protein>
    <recommendedName>
        <fullName evidence="1">Glucose-6-phosphate isomerase</fullName>
        <shortName evidence="1">GPI</shortName>
        <ecNumber evidence="1">5.3.1.9</ecNumber>
    </recommendedName>
    <alternativeName>
        <fullName evidence="1">Phosphoglucose isomerase</fullName>
        <shortName evidence="1">PGI</shortName>
    </alternativeName>
    <alternativeName>
        <fullName evidence="1">Phosphohexose isomerase</fullName>
        <shortName evidence="1">PHI</shortName>
    </alternativeName>
</protein>
<feature type="chain" id="PRO_1000135537" description="Glucose-6-phosphate isomerase">
    <location>
        <begin position="1"/>
        <end position="533"/>
    </location>
</feature>
<feature type="active site" description="Proton donor" evidence="1">
    <location>
        <position position="341"/>
    </location>
</feature>
<feature type="active site" evidence="1">
    <location>
        <position position="372"/>
    </location>
</feature>
<feature type="active site" evidence="1">
    <location>
        <position position="501"/>
    </location>
</feature>
<evidence type="ECO:0000255" key="1">
    <source>
        <dbReference type="HAMAP-Rule" id="MF_00473"/>
    </source>
</evidence>
<comment type="function">
    <text evidence="1">Catalyzes the reversible isomerization of glucose-6-phosphate to fructose-6-phosphate.</text>
</comment>
<comment type="catalytic activity">
    <reaction evidence="1">
        <text>alpha-D-glucose 6-phosphate = beta-D-fructose 6-phosphate</text>
        <dbReference type="Rhea" id="RHEA:11816"/>
        <dbReference type="ChEBI" id="CHEBI:57634"/>
        <dbReference type="ChEBI" id="CHEBI:58225"/>
        <dbReference type="EC" id="5.3.1.9"/>
    </reaction>
</comment>
<comment type="pathway">
    <text evidence="1">Carbohydrate biosynthesis; gluconeogenesis.</text>
</comment>
<comment type="pathway">
    <text evidence="1">Carbohydrate degradation; glycolysis; D-glyceraldehyde 3-phosphate and glycerone phosphate from D-glucose: step 2/4.</text>
</comment>
<comment type="subcellular location">
    <subcellularLocation>
        <location evidence="1">Cytoplasm</location>
    </subcellularLocation>
</comment>
<comment type="similarity">
    <text evidence="1">Belongs to the GPI family.</text>
</comment>
<reference key="1">
    <citation type="journal article" date="2009" name="J. Bacteriol.">
        <title>Complete genome sequence of Rhodobacter sphaeroides KD131.</title>
        <authorList>
            <person name="Lim S.-K."/>
            <person name="Kim S.J."/>
            <person name="Cha S.H."/>
            <person name="Oh Y.-K."/>
            <person name="Rhee H.-J."/>
            <person name="Kim M.-S."/>
            <person name="Lee J.K."/>
        </authorList>
    </citation>
    <scope>NUCLEOTIDE SEQUENCE [LARGE SCALE GENOMIC DNA]</scope>
    <source>
        <strain>KD131 / KCTC 12085</strain>
    </source>
</reference>
<sequence>MKQIWQALKAHQQAVEHRAILDLFADPRRAETFSTRLGDMLFDWSKTNIDHTARDLLIDLAGAAGVAEKREAMFSGAKINETEGRAVLHTALRNMDRPVRVDGVDVTPALRETHARMQAFVRDLRSGRFKGQGGPITDVVNIGIGGSDLGPAMACLALAPYADGPRCQFVSNVDGAHIHDTLKDLDPATTLVIVASKTFTTIETMTNAETAKRWMATRVSDPAAQFAAVSTAADRTAAFGIDASRVFGFEDWVGGRYSMWGPIGLALMIAIGPEEFDAFLAGGAEMDRHFREAPFAENLPVLLALVGLWHNQICGHATRAVLPYDQRLARLPAYLQQLEMESNGKRVAMDGHELTHHSGPIVWGEPGTNGQHAFYQLIHQGSRIVPCEFLVAREGHEPDLAHQHLLLVSNCLAQSEALLRGRSVEEARAILARKGLTGSELERQARHRVFPGNRPSTVLAYEKLTPATLGRIVALYEHRVFVEGVILGINSYDQWGVELGKELALALQPMLEGRAGTEGKDGSTAQLVSYLRC</sequence>